<gene>
    <name type="primary">VHA-C</name>
    <name type="synonym">DET3</name>
    <name type="synonym">VATC</name>
    <name type="ordered locus">At1g12840</name>
    <name type="ORF">F13K23.9</name>
</gene>
<proteinExistence type="evidence at protein level"/>
<keyword id="KW-0375">Hydrogen ion transport</keyword>
<keyword id="KW-0406">Ion transport</keyword>
<keyword id="KW-0472">Membrane</keyword>
<keyword id="KW-0597">Phosphoprotein</keyword>
<keyword id="KW-1185">Reference proteome</keyword>
<keyword id="KW-0813">Transport</keyword>
<keyword id="KW-0926">Vacuole</keyword>
<accession>Q9SDS7</accession>
<reference key="1">
    <citation type="journal article" date="1999" name="Genes Dev.">
        <title>The Arabidopsis det3 mutant reveals a central role for the vacuolar H(+)-ATPase in plant growth and development.</title>
        <authorList>
            <person name="Schumacher K."/>
            <person name="Vafeados D."/>
            <person name="McCarthy M."/>
            <person name="Sze H."/>
            <person name="Wilkins T."/>
            <person name="Chory J."/>
        </authorList>
    </citation>
    <scope>NUCLEOTIDE SEQUENCE [MRNA]</scope>
    <source>
        <strain>cv. Columbia</strain>
    </source>
</reference>
<reference key="2">
    <citation type="journal article" date="2000" name="Nature">
        <title>Sequence and analysis of chromosome 1 of the plant Arabidopsis thaliana.</title>
        <authorList>
            <person name="Theologis A."/>
            <person name="Ecker J.R."/>
            <person name="Palm C.J."/>
            <person name="Federspiel N.A."/>
            <person name="Kaul S."/>
            <person name="White O."/>
            <person name="Alonso J."/>
            <person name="Altafi H."/>
            <person name="Araujo R."/>
            <person name="Bowman C.L."/>
            <person name="Brooks S.Y."/>
            <person name="Buehler E."/>
            <person name="Chan A."/>
            <person name="Chao Q."/>
            <person name="Chen H."/>
            <person name="Cheuk R.F."/>
            <person name="Chin C.W."/>
            <person name="Chung M.K."/>
            <person name="Conn L."/>
            <person name="Conway A.B."/>
            <person name="Conway A.R."/>
            <person name="Creasy T.H."/>
            <person name="Dewar K."/>
            <person name="Dunn P."/>
            <person name="Etgu P."/>
            <person name="Feldblyum T.V."/>
            <person name="Feng J.-D."/>
            <person name="Fong B."/>
            <person name="Fujii C.Y."/>
            <person name="Gill J.E."/>
            <person name="Goldsmith A.D."/>
            <person name="Haas B."/>
            <person name="Hansen N.F."/>
            <person name="Hughes B."/>
            <person name="Huizar L."/>
            <person name="Hunter J.L."/>
            <person name="Jenkins J."/>
            <person name="Johnson-Hopson C."/>
            <person name="Khan S."/>
            <person name="Khaykin E."/>
            <person name="Kim C.J."/>
            <person name="Koo H.L."/>
            <person name="Kremenetskaia I."/>
            <person name="Kurtz D.B."/>
            <person name="Kwan A."/>
            <person name="Lam B."/>
            <person name="Langin-Hooper S."/>
            <person name="Lee A."/>
            <person name="Lee J.M."/>
            <person name="Lenz C.A."/>
            <person name="Li J.H."/>
            <person name="Li Y.-P."/>
            <person name="Lin X."/>
            <person name="Liu S.X."/>
            <person name="Liu Z.A."/>
            <person name="Luros J.S."/>
            <person name="Maiti R."/>
            <person name="Marziali A."/>
            <person name="Militscher J."/>
            <person name="Miranda M."/>
            <person name="Nguyen M."/>
            <person name="Nierman W.C."/>
            <person name="Osborne B.I."/>
            <person name="Pai G."/>
            <person name="Peterson J."/>
            <person name="Pham P.K."/>
            <person name="Rizzo M."/>
            <person name="Rooney T."/>
            <person name="Rowley D."/>
            <person name="Sakano H."/>
            <person name="Salzberg S.L."/>
            <person name="Schwartz J.R."/>
            <person name="Shinn P."/>
            <person name="Southwick A.M."/>
            <person name="Sun H."/>
            <person name="Tallon L.J."/>
            <person name="Tambunga G."/>
            <person name="Toriumi M.J."/>
            <person name="Town C.D."/>
            <person name="Utterback T."/>
            <person name="Van Aken S."/>
            <person name="Vaysberg M."/>
            <person name="Vysotskaia V.S."/>
            <person name="Walker M."/>
            <person name="Wu D."/>
            <person name="Yu G."/>
            <person name="Fraser C.M."/>
            <person name="Venter J.C."/>
            <person name="Davis R.W."/>
        </authorList>
    </citation>
    <scope>NUCLEOTIDE SEQUENCE [LARGE SCALE GENOMIC DNA]</scope>
    <source>
        <strain>cv. Columbia</strain>
    </source>
</reference>
<reference key="3">
    <citation type="journal article" date="2017" name="Plant J.">
        <title>Araport11: a complete reannotation of the Arabidopsis thaliana reference genome.</title>
        <authorList>
            <person name="Cheng C.Y."/>
            <person name="Krishnakumar V."/>
            <person name="Chan A.P."/>
            <person name="Thibaud-Nissen F."/>
            <person name="Schobel S."/>
            <person name="Town C.D."/>
        </authorList>
    </citation>
    <scope>GENOME REANNOTATION</scope>
    <source>
        <strain>cv. Columbia</strain>
    </source>
</reference>
<reference key="4">
    <citation type="journal article" date="2003" name="Science">
        <title>Empirical analysis of transcriptional activity in the Arabidopsis genome.</title>
        <authorList>
            <person name="Yamada K."/>
            <person name="Lim J."/>
            <person name="Dale J.M."/>
            <person name="Chen H."/>
            <person name="Shinn P."/>
            <person name="Palm C.J."/>
            <person name="Southwick A.M."/>
            <person name="Wu H.C."/>
            <person name="Kim C.J."/>
            <person name="Nguyen M."/>
            <person name="Pham P.K."/>
            <person name="Cheuk R.F."/>
            <person name="Karlin-Newmann G."/>
            <person name="Liu S.X."/>
            <person name="Lam B."/>
            <person name="Sakano H."/>
            <person name="Wu T."/>
            <person name="Yu G."/>
            <person name="Miranda M."/>
            <person name="Quach H.L."/>
            <person name="Tripp M."/>
            <person name="Chang C.H."/>
            <person name="Lee J.M."/>
            <person name="Toriumi M.J."/>
            <person name="Chan M.M."/>
            <person name="Tang C.C."/>
            <person name="Onodera C.S."/>
            <person name="Deng J.M."/>
            <person name="Akiyama K."/>
            <person name="Ansari Y."/>
            <person name="Arakawa T."/>
            <person name="Banh J."/>
            <person name="Banno F."/>
            <person name="Bowser L."/>
            <person name="Brooks S.Y."/>
            <person name="Carninci P."/>
            <person name="Chao Q."/>
            <person name="Choy N."/>
            <person name="Enju A."/>
            <person name="Goldsmith A.D."/>
            <person name="Gurjal M."/>
            <person name="Hansen N.F."/>
            <person name="Hayashizaki Y."/>
            <person name="Johnson-Hopson C."/>
            <person name="Hsuan V.W."/>
            <person name="Iida K."/>
            <person name="Karnes M."/>
            <person name="Khan S."/>
            <person name="Koesema E."/>
            <person name="Ishida J."/>
            <person name="Jiang P.X."/>
            <person name="Jones T."/>
            <person name="Kawai J."/>
            <person name="Kamiya A."/>
            <person name="Meyers C."/>
            <person name="Nakajima M."/>
            <person name="Narusaka M."/>
            <person name="Seki M."/>
            <person name="Sakurai T."/>
            <person name="Satou M."/>
            <person name="Tamse R."/>
            <person name="Vaysberg M."/>
            <person name="Wallender E.K."/>
            <person name="Wong C."/>
            <person name="Yamamura Y."/>
            <person name="Yuan S."/>
            <person name="Shinozaki K."/>
            <person name="Davis R.W."/>
            <person name="Theologis A."/>
            <person name="Ecker J.R."/>
        </authorList>
    </citation>
    <scope>NUCLEOTIDE SEQUENCE [LARGE SCALE MRNA]</scope>
    <source>
        <strain>cv. Columbia</strain>
    </source>
</reference>
<reference key="5">
    <citation type="journal article" date="2002" name="Trends Plant Sci.">
        <title>A simple nomenclature for a complex proton pump: VHA genes encode the vacuolar H(+)-ATPase.</title>
        <authorList>
            <person name="Sze H."/>
            <person name="Schumacher K."/>
            <person name="Mueller M.L."/>
            <person name="Padmanaban S."/>
            <person name="Taiz L."/>
        </authorList>
    </citation>
    <scope>GENE FAMILY</scope>
    <scope>NOMENCLATURE</scope>
</reference>
<reference key="6">
    <citation type="journal article" date="2006" name="FEBS Lett.">
        <title>A WNK kinase binds and phosphorylates V-ATPase subunit C.</title>
        <authorList>
            <person name="Hong-Hermesdorf A."/>
            <person name="Bruex A."/>
            <person name="Grueber A."/>
            <person name="Grueber G."/>
            <person name="Schumacher K."/>
        </authorList>
    </citation>
    <scope>PHOSPHORYLATION BY WNK8</scope>
</reference>
<reference key="7">
    <citation type="journal article" date="2007" name="Mol. Cell. Proteomics">
        <title>A proteomics dissection of Arabidopsis thaliana vacuoles isolated from cell culture.</title>
        <authorList>
            <person name="Jaquinod M."/>
            <person name="Villiers F."/>
            <person name="Kieffer-Jaquinod S."/>
            <person name="Hugouvieux V."/>
            <person name="Bruley C."/>
            <person name="Garin J."/>
            <person name="Bourguignon J."/>
        </authorList>
    </citation>
    <scope>IDENTIFICATION BY MASS SPECTROMETRY</scope>
    <scope>SUBCELLULAR LOCATION [LARGE SCALE ANALYSIS]</scope>
</reference>
<evidence type="ECO:0000269" key="1">
    <source>
    </source>
</evidence>
<evidence type="ECO:0000269" key="2">
    <source>
    </source>
</evidence>
<evidence type="ECO:0000305" key="3"/>
<name>VATC_ARATH</name>
<dbReference type="EMBL" id="AF208261">
    <property type="protein sequence ID" value="AAF20146.1"/>
    <property type="molecule type" value="mRNA"/>
</dbReference>
<dbReference type="EMBL" id="AC012187">
    <property type="protein sequence ID" value="AAF78489.1"/>
    <property type="molecule type" value="Genomic_DNA"/>
</dbReference>
<dbReference type="EMBL" id="CP002684">
    <property type="protein sequence ID" value="AEE28936.1"/>
    <property type="molecule type" value="Genomic_DNA"/>
</dbReference>
<dbReference type="EMBL" id="AF334725">
    <property type="protein sequence ID" value="AAG50103.1"/>
    <property type="molecule type" value="mRNA"/>
</dbReference>
<dbReference type="EMBL" id="AY059872">
    <property type="protein sequence ID" value="AAL24354.1"/>
    <property type="molecule type" value="mRNA"/>
</dbReference>
<dbReference type="EMBL" id="AY093334">
    <property type="protein sequence ID" value="AAM13333.1"/>
    <property type="molecule type" value="mRNA"/>
</dbReference>
<dbReference type="PIR" id="T52300">
    <property type="entry name" value="T52300"/>
</dbReference>
<dbReference type="RefSeq" id="NP_563916.1">
    <property type="nucleotide sequence ID" value="NM_101154.4"/>
</dbReference>
<dbReference type="SMR" id="Q9SDS7"/>
<dbReference type="BioGRID" id="23080">
    <property type="interactions" value="14"/>
</dbReference>
<dbReference type="FunCoup" id="Q9SDS7">
    <property type="interactions" value="2470"/>
</dbReference>
<dbReference type="IntAct" id="Q9SDS7">
    <property type="interactions" value="8"/>
</dbReference>
<dbReference type="MINT" id="Q9SDS7"/>
<dbReference type="STRING" id="3702.Q9SDS7"/>
<dbReference type="TCDB" id="3.A.2.2.5">
    <property type="family name" value="the h+- or na+-translocating f-type, v-type and a-type atpase (f-atpase) superfamily"/>
</dbReference>
<dbReference type="iPTMnet" id="Q9SDS7"/>
<dbReference type="PaxDb" id="3702-AT1G12840.1"/>
<dbReference type="ProteomicsDB" id="228577"/>
<dbReference type="EnsemblPlants" id="AT1G12840.1">
    <property type="protein sequence ID" value="AT1G12840.1"/>
    <property type="gene ID" value="AT1G12840"/>
</dbReference>
<dbReference type="GeneID" id="837840"/>
<dbReference type="Gramene" id="AT1G12840.1">
    <property type="protein sequence ID" value="AT1G12840.1"/>
    <property type="gene ID" value="AT1G12840"/>
</dbReference>
<dbReference type="KEGG" id="ath:AT1G12840"/>
<dbReference type="Araport" id="AT1G12840"/>
<dbReference type="TAIR" id="AT1G12840">
    <property type="gene designation" value="DET3"/>
</dbReference>
<dbReference type="eggNOG" id="KOG2909">
    <property type="taxonomic scope" value="Eukaryota"/>
</dbReference>
<dbReference type="HOGENOM" id="CLU_017554_3_0_1"/>
<dbReference type="InParanoid" id="Q9SDS7"/>
<dbReference type="OMA" id="VMIWIHV"/>
<dbReference type="OrthoDB" id="1057642at2759"/>
<dbReference type="PhylomeDB" id="Q9SDS7"/>
<dbReference type="CD-CODE" id="4299E36E">
    <property type="entry name" value="Nucleolus"/>
</dbReference>
<dbReference type="PRO" id="PR:Q9SDS7"/>
<dbReference type="Proteomes" id="UP000006548">
    <property type="component" value="Chromosome 1"/>
</dbReference>
<dbReference type="ExpressionAtlas" id="Q9SDS7">
    <property type="expression patterns" value="baseline and differential"/>
</dbReference>
<dbReference type="GO" id="GO:0009507">
    <property type="term" value="C:chloroplast"/>
    <property type="evidence" value="ECO:0007005"/>
    <property type="project" value="TAIR"/>
</dbReference>
<dbReference type="GO" id="GO:0005576">
    <property type="term" value="C:extracellular region"/>
    <property type="evidence" value="ECO:0007005"/>
    <property type="project" value="TAIR"/>
</dbReference>
<dbReference type="GO" id="GO:0005794">
    <property type="term" value="C:Golgi apparatus"/>
    <property type="evidence" value="ECO:0007005"/>
    <property type="project" value="TAIR"/>
</dbReference>
<dbReference type="GO" id="GO:0000325">
    <property type="term" value="C:plant-type vacuole"/>
    <property type="evidence" value="ECO:0007005"/>
    <property type="project" value="TAIR"/>
</dbReference>
<dbReference type="GO" id="GO:0005886">
    <property type="term" value="C:plasma membrane"/>
    <property type="evidence" value="ECO:0000314"/>
    <property type="project" value="TAIR"/>
</dbReference>
<dbReference type="GO" id="GO:0005774">
    <property type="term" value="C:vacuolar membrane"/>
    <property type="evidence" value="ECO:0007005"/>
    <property type="project" value="TAIR"/>
</dbReference>
<dbReference type="GO" id="GO:0000221">
    <property type="term" value="C:vacuolar proton-transporting V-type ATPase, V1 domain"/>
    <property type="evidence" value="ECO:0000314"/>
    <property type="project" value="TAIR"/>
</dbReference>
<dbReference type="GO" id="GO:0005773">
    <property type="term" value="C:vacuole"/>
    <property type="evidence" value="ECO:0007005"/>
    <property type="project" value="TAIR"/>
</dbReference>
<dbReference type="GO" id="GO:0046961">
    <property type="term" value="F:proton-transporting ATPase activity, rotational mechanism"/>
    <property type="evidence" value="ECO:0007669"/>
    <property type="project" value="InterPro"/>
</dbReference>
<dbReference type="GO" id="GO:0009826">
    <property type="term" value="P:unidimensional cell growth"/>
    <property type="evidence" value="ECO:0000315"/>
    <property type="project" value="TAIR"/>
</dbReference>
<dbReference type="CDD" id="cd14785">
    <property type="entry name" value="V-ATPase_C"/>
    <property type="match status" value="1"/>
</dbReference>
<dbReference type="FunFam" id="3.30.70.100:FF:000002">
    <property type="entry name" value="V-type proton ATPase subunit C"/>
    <property type="match status" value="1"/>
</dbReference>
<dbReference type="Gene3D" id="3.30.70.100">
    <property type="match status" value="1"/>
</dbReference>
<dbReference type="Gene3D" id="1.20.1460.10">
    <property type="entry name" value="subunit c (vma5p) of the yeast v-atpase, domain 2"/>
    <property type="match status" value="1"/>
</dbReference>
<dbReference type="Gene3D" id="3.30.70.1180">
    <property type="entry name" value="Vacuolar atp synthase subunit c, domain 1"/>
    <property type="match status" value="1"/>
</dbReference>
<dbReference type="InterPro" id="IPR004907">
    <property type="entry name" value="ATPase_V1-cplx_csu"/>
</dbReference>
<dbReference type="InterPro" id="IPR036132">
    <property type="entry name" value="Vac_ATP_synth_c_sf"/>
</dbReference>
<dbReference type="PANTHER" id="PTHR10137">
    <property type="entry name" value="V-TYPE PROTON ATPASE SUBUNIT C"/>
    <property type="match status" value="1"/>
</dbReference>
<dbReference type="PANTHER" id="PTHR10137:SF0">
    <property type="entry name" value="V-TYPE PROTON ATPASE SUBUNIT C"/>
    <property type="match status" value="1"/>
</dbReference>
<dbReference type="Pfam" id="PF03223">
    <property type="entry name" value="V-ATPase_C"/>
    <property type="match status" value="1"/>
</dbReference>
<dbReference type="SUPFAM" id="SSF118203">
    <property type="entry name" value="Vacuolar ATP synthase subunit C"/>
    <property type="match status" value="1"/>
</dbReference>
<sequence>MTSRYWVVSLPVKDSASSLWNRLQEQISKHSFDTPVYRFNIPNLRVGTLDSLLALGDDLLKSNSFVEGVSQKIRRQIEELERISGVESNALTVDGVPVDSYLTRFVWDEAKYPTMSPLKEVVDNIQSQVAKIEDDLKVRVAEYNNIRGQLNAINRKQSGSLAVRDLSNLVKPEDIVESEHLVTLLAVVPKYSQKDWLACYETLTDYVVPRSSKKLFEDNEYALYTVTLFTRVADNFRIAAREKGFQVRDFEQSVEAQETRKQELAKLVQDQESLRSSLLQWCYTSYGEVFSSWMHFCAVRTFAESIMRYGLPPAFLACVLSPAVKSEKKVRSILERLCDSTNSLYWKSEEDAGAMAGLAGDSETHPYVSFTINLA</sequence>
<organism>
    <name type="scientific">Arabidopsis thaliana</name>
    <name type="common">Mouse-ear cress</name>
    <dbReference type="NCBI Taxonomy" id="3702"/>
    <lineage>
        <taxon>Eukaryota</taxon>
        <taxon>Viridiplantae</taxon>
        <taxon>Streptophyta</taxon>
        <taxon>Embryophyta</taxon>
        <taxon>Tracheophyta</taxon>
        <taxon>Spermatophyta</taxon>
        <taxon>Magnoliopsida</taxon>
        <taxon>eudicotyledons</taxon>
        <taxon>Gunneridae</taxon>
        <taxon>Pentapetalae</taxon>
        <taxon>rosids</taxon>
        <taxon>malvids</taxon>
        <taxon>Brassicales</taxon>
        <taxon>Brassicaceae</taxon>
        <taxon>Camelineae</taxon>
        <taxon>Arabidopsis</taxon>
    </lineage>
</organism>
<comment type="function">
    <text>Subunit of the peripheral V1 complex of vacuolar ATPase. Subunit C is necessary for the assembly of the catalytic sector of the enzyme and is likely to have a specific function in its catalytic activity. V-ATPase is responsible for acidifying a variety of intracellular compartments in eukaryotic cells.</text>
</comment>
<comment type="subunit">
    <text>V-ATPase is a heteromultimeric enzyme composed of a peripheral catalytic V1 complex (components A to H) attached to an integral membrane V0 proton pore complex (components: a, c, c'', d and e).</text>
</comment>
<comment type="interaction">
    <interactant intactId="EBI-1794418">
        <id>Q9SDS7</id>
    </interactant>
    <interactant intactId="EBI-4441446">
        <id>Q944Q0</id>
        <label>WNK8</label>
    </interactant>
    <organismsDiffer>false</organismsDiffer>
    <experiments>4</experiments>
</comment>
<comment type="subcellular location">
    <subcellularLocation>
        <location evidence="2">Vacuole membrane</location>
        <topology evidence="3">Peripheral membrane protein</topology>
    </subcellularLocation>
</comment>
<comment type="PTM">
    <text evidence="1">Phosphorylated on Ser/Thr residues by WNK8.</text>
</comment>
<comment type="similarity">
    <text evidence="3">Belongs to the V-ATPase C subunit family.</text>
</comment>
<feature type="chain" id="PRO_0000209355" description="V-type proton ATPase subunit C">
    <location>
        <begin position="1"/>
        <end position="375"/>
    </location>
</feature>
<protein>
    <recommendedName>
        <fullName>V-type proton ATPase subunit C</fullName>
        <shortName>V-ATPase subunit C</shortName>
    </recommendedName>
    <alternativeName>
        <fullName>Vacuolar H(+)-ATPase subunit C</fullName>
    </alternativeName>
    <alternativeName>
        <fullName>Vacuolar proton pump subunit C</fullName>
    </alternativeName>
</protein>